<keyword id="KW-0002">3D-structure</keyword>
<keyword id="KW-0963">Cytoplasm</keyword>
<keyword id="KW-0255">Endonuclease</keyword>
<keyword id="KW-0378">Hydrolase</keyword>
<keyword id="KW-0540">Nuclease</keyword>
<keyword id="KW-1185">Reference proteome</keyword>
<keyword id="KW-0819">tRNA processing</keyword>
<gene>
    <name evidence="1" type="primary">rnp2</name>
    <name type="ordered locus">TK1767</name>
</gene>
<reference key="1">
    <citation type="journal article" date="2005" name="Genome Res.">
        <title>Complete genome sequence of the hyperthermophilic archaeon Thermococcus kodakaraensis KOD1 and comparison with Pyrococcus genomes.</title>
        <authorList>
            <person name="Fukui T."/>
            <person name="Atomi H."/>
            <person name="Kanai T."/>
            <person name="Matsumi R."/>
            <person name="Fujiwara S."/>
            <person name="Imanaka T."/>
        </authorList>
    </citation>
    <scope>NUCLEOTIDE SEQUENCE [LARGE SCALE GENOMIC DNA]</scope>
    <source>
        <strain>ATCC BAA-918 / JCM 12380 / KOD1</strain>
    </source>
</reference>
<name>RNP2_THEKO</name>
<protein>
    <recommendedName>
        <fullName evidence="1">Ribonuclease P protein component 2</fullName>
        <shortName evidence="1">RNase P component 2</shortName>
        <ecNumber evidence="1">3.1.26.5</ecNumber>
    </recommendedName>
    <alternativeName>
        <fullName evidence="1">Pop5</fullName>
    </alternativeName>
</protein>
<accession>Q5JJ62</accession>
<organism>
    <name type="scientific">Thermococcus kodakarensis (strain ATCC BAA-918 / JCM 12380 / KOD1)</name>
    <name type="common">Pyrococcus kodakaraensis (strain KOD1)</name>
    <dbReference type="NCBI Taxonomy" id="69014"/>
    <lineage>
        <taxon>Archaea</taxon>
        <taxon>Methanobacteriati</taxon>
        <taxon>Methanobacteriota</taxon>
        <taxon>Thermococci</taxon>
        <taxon>Thermococcales</taxon>
        <taxon>Thermococcaceae</taxon>
        <taxon>Thermococcus</taxon>
    </lineage>
</organism>
<feature type="chain" id="PRO_0000140028" description="Ribonuclease P protein component 2">
    <location>
        <begin position="1"/>
        <end position="120"/>
    </location>
</feature>
<feature type="strand" evidence="2">
    <location>
        <begin position="16"/>
        <end position="27"/>
    </location>
</feature>
<feature type="helix" evidence="2">
    <location>
        <begin position="31"/>
        <end position="45"/>
    </location>
</feature>
<feature type="helix" evidence="2">
    <location>
        <begin position="47"/>
        <end position="54"/>
    </location>
</feature>
<feature type="strand" evidence="2">
    <location>
        <begin position="57"/>
        <end position="62"/>
    </location>
</feature>
<feature type="turn" evidence="2">
    <location>
        <begin position="63"/>
        <end position="66"/>
    </location>
</feature>
<feature type="strand" evidence="2">
    <location>
        <begin position="67"/>
        <end position="73"/>
    </location>
</feature>
<feature type="helix" evidence="2">
    <location>
        <begin position="74"/>
        <end position="76"/>
    </location>
</feature>
<feature type="helix" evidence="2">
    <location>
        <begin position="77"/>
        <end position="85"/>
    </location>
</feature>
<feature type="strand" evidence="2">
    <location>
        <begin position="93"/>
        <end position="105"/>
    </location>
</feature>
<feature type="helix" evidence="2">
    <location>
        <begin position="106"/>
        <end position="112"/>
    </location>
</feature>
<feature type="turn" evidence="2">
    <location>
        <begin position="113"/>
        <end position="118"/>
    </location>
</feature>
<evidence type="ECO:0000255" key="1">
    <source>
        <dbReference type="HAMAP-Rule" id="MF_00755"/>
    </source>
</evidence>
<evidence type="ECO:0007829" key="2">
    <source>
        <dbReference type="PDB" id="3WZ0"/>
    </source>
</evidence>
<dbReference type="EC" id="3.1.26.5" evidence="1"/>
<dbReference type="EMBL" id="AP006878">
    <property type="protein sequence ID" value="BAD85956.1"/>
    <property type="molecule type" value="Genomic_DNA"/>
</dbReference>
<dbReference type="RefSeq" id="WP_011250718.1">
    <property type="nucleotide sequence ID" value="NC_006624.1"/>
</dbReference>
<dbReference type="PDB" id="3WZ0">
    <property type="method" value="X-ray"/>
    <property type="resolution" value="2.79 A"/>
    <property type="chains" value="A/C=1-120"/>
</dbReference>
<dbReference type="PDBsum" id="3WZ0"/>
<dbReference type="SMR" id="Q5JJ62"/>
<dbReference type="STRING" id="69014.TK1767"/>
<dbReference type="EnsemblBacteria" id="BAD85956">
    <property type="protein sequence ID" value="BAD85956"/>
    <property type="gene ID" value="TK1767"/>
</dbReference>
<dbReference type="GeneID" id="78448297"/>
<dbReference type="KEGG" id="tko:TK1767"/>
<dbReference type="PATRIC" id="fig|69014.16.peg.1723"/>
<dbReference type="eggNOG" id="arCOG01365">
    <property type="taxonomic scope" value="Archaea"/>
</dbReference>
<dbReference type="HOGENOM" id="CLU_137733_1_0_2"/>
<dbReference type="InParanoid" id="Q5JJ62"/>
<dbReference type="OrthoDB" id="19261at2157"/>
<dbReference type="PhylomeDB" id="Q5JJ62"/>
<dbReference type="EvolutionaryTrace" id="Q5JJ62"/>
<dbReference type="Proteomes" id="UP000000536">
    <property type="component" value="Chromosome"/>
</dbReference>
<dbReference type="GO" id="GO:0005737">
    <property type="term" value="C:cytoplasm"/>
    <property type="evidence" value="ECO:0007669"/>
    <property type="project" value="UniProtKB-SubCell"/>
</dbReference>
<dbReference type="GO" id="GO:0030677">
    <property type="term" value="C:ribonuclease P complex"/>
    <property type="evidence" value="ECO:0007669"/>
    <property type="project" value="UniProtKB-UniRule"/>
</dbReference>
<dbReference type="GO" id="GO:0004526">
    <property type="term" value="F:ribonuclease P activity"/>
    <property type="evidence" value="ECO:0007669"/>
    <property type="project" value="UniProtKB-UniRule"/>
</dbReference>
<dbReference type="GO" id="GO:0001682">
    <property type="term" value="P:tRNA 5'-leader removal"/>
    <property type="evidence" value="ECO:0007669"/>
    <property type="project" value="UniProtKB-UniRule"/>
</dbReference>
<dbReference type="FunFam" id="3.30.70.3250:FF:000007">
    <property type="entry name" value="Ribonuclease P protein component 2"/>
    <property type="match status" value="1"/>
</dbReference>
<dbReference type="Gene3D" id="3.30.70.3250">
    <property type="entry name" value="Ribonuclease P, Pop5 subunit"/>
    <property type="match status" value="1"/>
</dbReference>
<dbReference type="HAMAP" id="MF_00755">
    <property type="entry name" value="RNase_P_2"/>
    <property type="match status" value="1"/>
</dbReference>
<dbReference type="InterPro" id="IPR002759">
    <property type="entry name" value="Pop5/Rpp14/Rnp2-like"/>
</dbReference>
<dbReference type="InterPro" id="IPR038085">
    <property type="entry name" value="Rnp2-like_sf"/>
</dbReference>
<dbReference type="InterPro" id="IPR016434">
    <property type="entry name" value="Rnp2_archaea"/>
</dbReference>
<dbReference type="NCBIfam" id="NF002986">
    <property type="entry name" value="PRK03717.1"/>
    <property type="match status" value="1"/>
</dbReference>
<dbReference type="PANTHER" id="PTHR15441">
    <property type="entry name" value="RIBONUCLEASE P PROTEIN SUBUNIT P14"/>
    <property type="match status" value="1"/>
</dbReference>
<dbReference type="PANTHER" id="PTHR15441:SF2">
    <property type="entry name" value="RIBONUCLEASE P_MRP PROTEIN SUBUNIT POP5"/>
    <property type="match status" value="1"/>
</dbReference>
<dbReference type="Pfam" id="PF01900">
    <property type="entry name" value="RNase_P_Rpp14"/>
    <property type="match status" value="1"/>
</dbReference>
<dbReference type="PIRSF" id="PIRSF004952">
    <property type="entry name" value="RNase_P_2"/>
    <property type="match status" value="1"/>
</dbReference>
<dbReference type="SUPFAM" id="SSF160350">
    <property type="entry name" value="Rnp2-like"/>
    <property type="match status" value="1"/>
</dbReference>
<proteinExistence type="evidence at protein level"/>
<comment type="function">
    <text evidence="1">Part of ribonuclease P, a protein complex that generates mature tRNA molecules by cleaving their 5'-ends.</text>
</comment>
<comment type="catalytic activity">
    <reaction evidence="1">
        <text>Endonucleolytic cleavage of RNA, removing 5'-extranucleotides from tRNA precursor.</text>
        <dbReference type="EC" id="3.1.26.5"/>
    </reaction>
</comment>
<comment type="subunit">
    <text evidence="1">Consists of a catalytic RNA component and at least 4-5 protein subunits.</text>
</comment>
<comment type="subcellular location">
    <subcellularLocation>
        <location evidence="1">Cytoplasm</location>
    </subcellularLocation>
</comment>
<comment type="similarity">
    <text evidence="1">Belongs to the eukaryotic/archaeal RNase P protein component 2 family.</text>
</comment>
<sequence>MREKPKYLPPTLRDKNRYIAFQVIGERPFKKDEIKKAVWEASLSALGYLGSARAKPWFIKFDEKSQTGIVRVDRKHVEELRFALTMLTEINGSKVIFRTLGVSGTIKRLKRKFLAEYGWR</sequence>